<organism>
    <name type="scientific">Brucella melitensis biotype 1 (strain ATCC 23456 / CCUG 17765 / NCTC 10094 / 16M)</name>
    <dbReference type="NCBI Taxonomy" id="224914"/>
    <lineage>
        <taxon>Bacteria</taxon>
        <taxon>Pseudomonadati</taxon>
        <taxon>Pseudomonadota</taxon>
        <taxon>Alphaproteobacteria</taxon>
        <taxon>Hyphomicrobiales</taxon>
        <taxon>Brucellaceae</taxon>
        <taxon>Brucella/Ochrobactrum group</taxon>
        <taxon>Brucella</taxon>
    </lineage>
</organism>
<keyword id="KW-0050">Antiport</keyword>
<keyword id="KW-0997">Cell inner membrane</keyword>
<keyword id="KW-1003">Cell membrane</keyword>
<keyword id="KW-0406">Ion transport</keyword>
<keyword id="KW-0472">Membrane</keyword>
<keyword id="KW-0812">Transmembrane</keyword>
<keyword id="KW-1133">Transmembrane helix</keyword>
<keyword id="KW-0813">Transport</keyword>
<proteinExistence type="inferred from homology"/>
<evidence type="ECO:0000250" key="1"/>
<evidence type="ECO:0000255" key="2"/>
<evidence type="ECO:0000305" key="3"/>
<dbReference type="EMBL" id="AE008917">
    <property type="protein sequence ID" value="AAL52766.1"/>
    <property type="molecule type" value="Genomic_DNA"/>
</dbReference>
<dbReference type="PIR" id="AC3450">
    <property type="entry name" value="AC3450"/>
</dbReference>
<dbReference type="RefSeq" id="WP_004682927.1">
    <property type="nucleotide sequence ID" value="NZ_GG703778.1"/>
</dbReference>
<dbReference type="SMR" id="Q8YFD7"/>
<dbReference type="KEGG" id="bme:BMEI1585"/>
<dbReference type="KEGG" id="bmel:DK63_1904"/>
<dbReference type="PATRIC" id="fig|224914.52.peg.2005"/>
<dbReference type="eggNOG" id="COG0534">
    <property type="taxonomic scope" value="Bacteria"/>
</dbReference>
<dbReference type="PhylomeDB" id="Q8YFD7"/>
<dbReference type="Proteomes" id="UP000000419">
    <property type="component" value="Chromosome I"/>
</dbReference>
<dbReference type="GO" id="GO:0005886">
    <property type="term" value="C:plasma membrane"/>
    <property type="evidence" value="ECO:0007669"/>
    <property type="project" value="UniProtKB-SubCell"/>
</dbReference>
<dbReference type="GO" id="GO:0015297">
    <property type="term" value="F:antiporter activity"/>
    <property type="evidence" value="ECO:0007669"/>
    <property type="project" value="UniProtKB-KW"/>
</dbReference>
<dbReference type="GO" id="GO:0042910">
    <property type="term" value="F:xenobiotic transmembrane transporter activity"/>
    <property type="evidence" value="ECO:0007669"/>
    <property type="project" value="InterPro"/>
</dbReference>
<dbReference type="GO" id="GO:0006811">
    <property type="term" value="P:monoatomic ion transport"/>
    <property type="evidence" value="ECO:0007669"/>
    <property type="project" value="UniProtKB-KW"/>
</dbReference>
<dbReference type="CDD" id="cd13131">
    <property type="entry name" value="MATE_NorM_like"/>
    <property type="match status" value="1"/>
</dbReference>
<dbReference type="InterPro" id="IPR002528">
    <property type="entry name" value="MATE_fam"/>
</dbReference>
<dbReference type="InterPro" id="IPR050222">
    <property type="entry name" value="MATE_MdtK"/>
</dbReference>
<dbReference type="InterPro" id="IPR048279">
    <property type="entry name" value="MdtK-like"/>
</dbReference>
<dbReference type="NCBIfam" id="TIGR00797">
    <property type="entry name" value="matE"/>
    <property type="match status" value="1"/>
</dbReference>
<dbReference type="PANTHER" id="PTHR43298:SF2">
    <property type="entry name" value="FMN_FAD EXPORTER YEEO-RELATED"/>
    <property type="match status" value="1"/>
</dbReference>
<dbReference type="PANTHER" id="PTHR43298">
    <property type="entry name" value="MULTIDRUG RESISTANCE PROTEIN NORM-RELATED"/>
    <property type="match status" value="1"/>
</dbReference>
<dbReference type="Pfam" id="PF01554">
    <property type="entry name" value="MatE"/>
    <property type="match status" value="2"/>
</dbReference>
<dbReference type="PIRSF" id="PIRSF006603">
    <property type="entry name" value="DinF"/>
    <property type="match status" value="1"/>
</dbReference>
<protein>
    <recommendedName>
        <fullName>Probable multidrug resistance protein NorM</fullName>
    </recommendedName>
    <alternativeName>
        <fullName>Multidrug-efflux transporter</fullName>
    </alternativeName>
</protein>
<accession>Q8YFD7</accession>
<feature type="chain" id="PRO_0000164208" description="Probable multidrug resistance protein NorM">
    <location>
        <begin position="1"/>
        <end position="471"/>
    </location>
</feature>
<feature type="transmembrane region" description="Helical" evidence="2">
    <location>
        <begin position="30"/>
        <end position="52"/>
    </location>
</feature>
<feature type="transmembrane region" description="Helical" evidence="2">
    <location>
        <begin position="67"/>
        <end position="89"/>
    </location>
</feature>
<feature type="transmembrane region" description="Helical" evidence="2">
    <location>
        <begin position="110"/>
        <end position="132"/>
    </location>
</feature>
<feature type="transmembrane region" description="Helical" evidence="2">
    <location>
        <begin position="147"/>
        <end position="169"/>
    </location>
</feature>
<feature type="transmembrane region" description="Helical" evidence="2">
    <location>
        <begin position="176"/>
        <end position="198"/>
    </location>
</feature>
<feature type="transmembrane region" description="Helical" evidence="2">
    <location>
        <begin position="208"/>
        <end position="230"/>
    </location>
</feature>
<feature type="transmembrane region" description="Helical" evidence="2">
    <location>
        <begin position="255"/>
        <end position="277"/>
    </location>
</feature>
<feature type="transmembrane region" description="Helical" evidence="2">
    <location>
        <begin position="287"/>
        <end position="309"/>
    </location>
</feature>
<feature type="transmembrane region" description="Helical" evidence="2">
    <location>
        <begin position="330"/>
        <end position="352"/>
    </location>
</feature>
<feature type="transmembrane region" description="Helical" evidence="2">
    <location>
        <begin position="372"/>
        <end position="389"/>
    </location>
</feature>
<feature type="transmembrane region" description="Helical" evidence="2">
    <location>
        <begin position="410"/>
        <end position="432"/>
    </location>
</feature>
<feature type="transmembrane region" description="Helical" evidence="2">
    <location>
        <begin position="436"/>
        <end position="458"/>
    </location>
</feature>
<reference key="1">
    <citation type="journal article" date="2002" name="Proc. Natl. Acad. Sci. U.S.A.">
        <title>The genome sequence of the facultative intracellular pathogen Brucella melitensis.</title>
        <authorList>
            <person name="DelVecchio V.G."/>
            <person name="Kapatral V."/>
            <person name="Redkar R.J."/>
            <person name="Patra G."/>
            <person name="Mujer C."/>
            <person name="Los T."/>
            <person name="Ivanova N."/>
            <person name="Anderson I."/>
            <person name="Bhattacharyya A."/>
            <person name="Lykidis A."/>
            <person name="Reznik G."/>
            <person name="Jablonski L."/>
            <person name="Larsen N."/>
            <person name="D'Souza M."/>
            <person name="Bernal A."/>
            <person name="Mazur M."/>
            <person name="Goltsman E."/>
            <person name="Selkov E."/>
            <person name="Elzer P.H."/>
            <person name="Hagius S."/>
            <person name="O'Callaghan D."/>
            <person name="Letesson J.-J."/>
            <person name="Haselkorn R."/>
            <person name="Kyrpides N.C."/>
            <person name="Overbeek R."/>
        </authorList>
    </citation>
    <scope>NUCLEOTIDE SEQUENCE [LARGE SCALE GENOMIC DNA]</scope>
    <source>
        <strain>ATCC 23456 / CCUG 17765 / NCTC 10094 / 16M</strain>
    </source>
</reference>
<name>NORM_BRUME</name>
<comment type="function">
    <text evidence="1">Multidrug efflux pump.</text>
</comment>
<comment type="subcellular location">
    <subcellularLocation>
        <location evidence="1">Cell inner membrane</location>
        <topology evidence="1">Multi-pass membrane protein</topology>
    </subcellularLocation>
</comment>
<comment type="similarity">
    <text evidence="3">Belongs to the multi antimicrobial extrusion (MATE) (TC 2.A.66.1) family.</text>
</comment>
<sequence length="471" mass="51685">MDGTFDAGFREPTISKANRWGREMVVALKLGWPLIFTNLSQAALTATDVIFIGRLGADTLASALLATSFYHTLMIFSMGLVSAVMPMIAIALGKNRHSVRDVRRTVRQGFWSAIMIVIPLWVVLWHCEEIFLFLGQRPDIAARSTDFMHTLQWALLPYLFYIVLRSFFAAMEKPMWTLLVAALAIGFNALAGWTLIFGHFGFAPMGLHGAGMATTASSTMMFLGLAFITLRHPRFRRYHLFGRFWRPDWPRLIELWRIGLPMALTFVFETSIFYAAVVMMGRIGPTAMAAHAVAIQIASLSFMVPLGFGQVATVRVGRAYGRGDPKAIAYAGWSAYALGVGFMALMGILMVLMPRVFIGIFLNLNDPQNLPVMELAVTFLALAALFQIVDGAQAVAAGMLRGLRDTRIPMLLALFGYWGVGLPLGAVLAFQFGMGGVGIWLGLAAGLGMVAVLMTIRWRRHLAHVSAVAAA</sequence>
<gene>
    <name type="primary">norM</name>
    <name type="ordered locus">BMEI1585</name>
</gene>